<sequence>MIRQRTLKNMIWGTGIGLHSGKKVYIGLRPAPVNTGIVFHRSDIEGGAWIKADPLHVVDTRLSTNIGDGHIRVGTVEHLMSALAGLGIDNAYVDLDGPEVPIMDGSAAPFVFLIQCAGIEEQNAPKRFIRITKPLKAEDGDRWVQLEPFEGFKVSFAIDFDHPVMKNGGQEVTVDFARTSYLKEVARARTFGFMREVEALRRMGLALGGNLDNAIVVDDYRVLNEEGLRYTNEFVRHKVLDSIGDLYLLGHPLVGHFSGHKAGHALNNSLLRALLLRQDAWEFVDYAERRAPFSFADTLVTASA</sequence>
<protein>
    <recommendedName>
        <fullName evidence="1">UDP-3-O-acyl-N-acetylglucosamine deacetylase</fullName>
        <shortName evidence="1">UDP-3-O-acyl-GlcNAc deacetylase</shortName>
        <ecNumber evidence="1">3.5.1.108</ecNumber>
    </recommendedName>
    <alternativeName>
        <fullName evidence="1">UDP-3-O-[R-3-hydroxymyristoyl]-N-acetylglucosamine deacetylase</fullName>
    </alternativeName>
</protein>
<dbReference type="EC" id="3.5.1.108" evidence="1"/>
<dbReference type="EMBL" id="CP001132">
    <property type="protein sequence ID" value="ACH82653.1"/>
    <property type="molecule type" value="Genomic_DNA"/>
</dbReference>
<dbReference type="RefSeq" id="WP_009561081.1">
    <property type="nucleotide sequence ID" value="NC_011206.1"/>
</dbReference>
<dbReference type="SMR" id="B5ELD7"/>
<dbReference type="GeneID" id="65279604"/>
<dbReference type="KEGG" id="afe:Lferr_0399"/>
<dbReference type="eggNOG" id="COG0774">
    <property type="taxonomic scope" value="Bacteria"/>
</dbReference>
<dbReference type="HOGENOM" id="CLU_046528_1_0_6"/>
<dbReference type="UniPathway" id="UPA00359">
    <property type="reaction ID" value="UER00478"/>
</dbReference>
<dbReference type="GO" id="GO:0016020">
    <property type="term" value="C:membrane"/>
    <property type="evidence" value="ECO:0007669"/>
    <property type="project" value="GOC"/>
</dbReference>
<dbReference type="GO" id="GO:0046872">
    <property type="term" value="F:metal ion binding"/>
    <property type="evidence" value="ECO:0007669"/>
    <property type="project" value="UniProtKB-KW"/>
</dbReference>
<dbReference type="GO" id="GO:0103117">
    <property type="term" value="F:UDP-3-O-acyl-N-acetylglucosamine deacetylase activity"/>
    <property type="evidence" value="ECO:0007669"/>
    <property type="project" value="UniProtKB-UniRule"/>
</dbReference>
<dbReference type="GO" id="GO:0009245">
    <property type="term" value="P:lipid A biosynthetic process"/>
    <property type="evidence" value="ECO:0007669"/>
    <property type="project" value="UniProtKB-UniRule"/>
</dbReference>
<dbReference type="Gene3D" id="3.30.230.20">
    <property type="entry name" value="lpxc deacetylase, domain 1"/>
    <property type="match status" value="1"/>
</dbReference>
<dbReference type="Gene3D" id="3.30.1700.10">
    <property type="entry name" value="lpxc deacetylase, domain 2"/>
    <property type="match status" value="1"/>
</dbReference>
<dbReference type="HAMAP" id="MF_00388">
    <property type="entry name" value="LpxC"/>
    <property type="match status" value="1"/>
</dbReference>
<dbReference type="InterPro" id="IPR020568">
    <property type="entry name" value="Ribosomal_Su5_D2-typ_SF"/>
</dbReference>
<dbReference type="InterPro" id="IPR004463">
    <property type="entry name" value="UDP-acyl_GlcNac_deAcase"/>
</dbReference>
<dbReference type="InterPro" id="IPR011334">
    <property type="entry name" value="UDP-acyl_GlcNac_deAcase_C"/>
</dbReference>
<dbReference type="InterPro" id="IPR015870">
    <property type="entry name" value="UDP-acyl_N-AcGlcN_deAcase_N"/>
</dbReference>
<dbReference type="NCBIfam" id="TIGR00325">
    <property type="entry name" value="lpxC"/>
    <property type="match status" value="1"/>
</dbReference>
<dbReference type="PANTHER" id="PTHR33694">
    <property type="entry name" value="UDP-3-O-ACYL-N-ACETYLGLUCOSAMINE DEACETYLASE 1, MITOCHONDRIAL-RELATED"/>
    <property type="match status" value="1"/>
</dbReference>
<dbReference type="PANTHER" id="PTHR33694:SF1">
    <property type="entry name" value="UDP-3-O-ACYL-N-ACETYLGLUCOSAMINE DEACETYLASE 1, MITOCHONDRIAL-RELATED"/>
    <property type="match status" value="1"/>
</dbReference>
<dbReference type="Pfam" id="PF03331">
    <property type="entry name" value="LpxC"/>
    <property type="match status" value="1"/>
</dbReference>
<dbReference type="SUPFAM" id="SSF54211">
    <property type="entry name" value="Ribosomal protein S5 domain 2-like"/>
    <property type="match status" value="2"/>
</dbReference>
<comment type="function">
    <text evidence="1">Catalyzes the hydrolysis of UDP-3-O-myristoyl-N-acetylglucosamine to form UDP-3-O-myristoylglucosamine and acetate, the committed step in lipid A biosynthesis.</text>
</comment>
<comment type="catalytic activity">
    <reaction evidence="1">
        <text>a UDP-3-O-[(3R)-3-hydroxyacyl]-N-acetyl-alpha-D-glucosamine + H2O = a UDP-3-O-[(3R)-3-hydroxyacyl]-alpha-D-glucosamine + acetate</text>
        <dbReference type="Rhea" id="RHEA:67816"/>
        <dbReference type="ChEBI" id="CHEBI:15377"/>
        <dbReference type="ChEBI" id="CHEBI:30089"/>
        <dbReference type="ChEBI" id="CHEBI:137740"/>
        <dbReference type="ChEBI" id="CHEBI:173225"/>
        <dbReference type="EC" id="3.5.1.108"/>
    </reaction>
</comment>
<comment type="cofactor">
    <cofactor evidence="1">
        <name>Zn(2+)</name>
        <dbReference type="ChEBI" id="CHEBI:29105"/>
    </cofactor>
</comment>
<comment type="pathway">
    <text evidence="1">Glycolipid biosynthesis; lipid IV(A) biosynthesis; lipid IV(A) from (3R)-3-hydroxytetradecanoyl-[acyl-carrier-protein] and UDP-N-acetyl-alpha-D-glucosamine: step 2/6.</text>
</comment>
<comment type="similarity">
    <text evidence="1">Belongs to the LpxC family.</text>
</comment>
<name>LPXC_ACIF5</name>
<evidence type="ECO:0000255" key="1">
    <source>
        <dbReference type="HAMAP-Rule" id="MF_00388"/>
    </source>
</evidence>
<gene>
    <name evidence="1" type="primary">lpxC</name>
    <name type="ordered locus">Lferr_0399</name>
</gene>
<accession>B5ELD7</accession>
<proteinExistence type="inferred from homology"/>
<organism>
    <name type="scientific">Acidithiobacillus ferrooxidans (strain ATCC 53993 / BNL-5-31)</name>
    <name type="common">Leptospirillum ferrooxidans (ATCC 53993)</name>
    <dbReference type="NCBI Taxonomy" id="380394"/>
    <lineage>
        <taxon>Bacteria</taxon>
        <taxon>Pseudomonadati</taxon>
        <taxon>Pseudomonadota</taxon>
        <taxon>Acidithiobacillia</taxon>
        <taxon>Acidithiobacillales</taxon>
        <taxon>Acidithiobacillaceae</taxon>
        <taxon>Acidithiobacillus</taxon>
    </lineage>
</organism>
<reference key="1">
    <citation type="submission" date="2008-08" db="EMBL/GenBank/DDBJ databases">
        <title>Complete sequence of Acidithiobacillus ferrooxidans ATCC 53993.</title>
        <authorList>
            <person name="Lucas S."/>
            <person name="Copeland A."/>
            <person name="Lapidus A."/>
            <person name="Glavina del Rio T."/>
            <person name="Dalin E."/>
            <person name="Tice H."/>
            <person name="Bruce D."/>
            <person name="Goodwin L."/>
            <person name="Pitluck S."/>
            <person name="Sims D."/>
            <person name="Brettin T."/>
            <person name="Detter J.C."/>
            <person name="Han C."/>
            <person name="Kuske C.R."/>
            <person name="Larimer F."/>
            <person name="Land M."/>
            <person name="Hauser L."/>
            <person name="Kyrpides N."/>
            <person name="Lykidis A."/>
            <person name="Borole A.P."/>
        </authorList>
    </citation>
    <scope>NUCLEOTIDE SEQUENCE [LARGE SCALE GENOMIC DNA]</scope>
    <source>
        <strain>ATCC 53993 / BNL-5-31</strain>
    </source>
</reference>
<feature type="chain" id="PRO_1000190873" description="UDP-3-O-acyl-N-acetylglucosamine deacetylase">
    <location>
        <begin position="1"/>
        <end position="304"/>
    </location>
</feature>
<feature type="active site" description="Proton donor" evidence="1">
    <location>
        <position position="264"/>
    </location>
</feature>
<feature type="binding site" evidence="1">
    <location>
        <position position="78"/>
    </location>
    <ligand>
        <name>Zn(2+)</name>
        <dbReference type="ChEBI" id="CHEBI:29105"/>
    </ligand>
</feature>
<feature type="binding site" evidence="1">
    <location>
        <position position="237"/>
    </location>
    <ligand>
        <name>Zn(2+)</name>
        <dbReference type="ChEBI" id="CHEBI:29105"/>
    </ligand>
</feature>
<feature type="binding site" evidence="1">
    <location>
        <position position="241"/>
    </location>
    <ligand>
        <name>Zn(2+)</name>
        <dbReference type="ChEBI" id="CHEBI:29105"/>
    </ligand>
</feature>
<keyword id="KW-0378">Hydrolase</keyword>
<keyword id="KW-0441">Lipid A biosynthesis</keyword>
<keyword id="KW-0444">Lipid biosynthesis</keyword>
<keyword id="KW-0443">Lipid metabolism</keyword>
<keyword id="KW-0479">Metal-binding</keyword>
<keyword id="KW-0862">Zinc</keyword>